<organism>
    <name type="scientific">Haemophilus influenzae (strain ATCC 51907 / DSM 11121 / KW20 / Rd)</name>
    <dbReference type="NCBI Taxonomy" id="71421"/>
    <lineage>
        <taxon>Bacteria</taxon>
        <taxon>Pseudomonadati</taxon>
        <taxon>Pseudomonadota</taxon>
        <taxon>Gammaproteobacteria</taxon>
        <taxon>Pasteurellales</taxon>
        <taxon>Pasteurellaceae</taxon>
        <taxon>Haemophilus</taxon>
    </lineage>
</organism>
<dbReference type="EMBL" id="L42023">
    <property type="protein sequence ID" value="AAC23225.1"/>
    <property type="molecule type" value="Genomic_DNA"/>
</dbReference>
<dbReference type="RefSeq" id="NP_439717.1">
    <property type="nucleotide sequence ID" value="NC_000907.1"/>
</dbReference>
<dbReference type="SMR" id="P44260"/>
<dbReference type="STRING" id="71421.HI_1571"/>
<dbReference type="EnsemblBacteria" id="AAC23225">
    <property type="protein sequence ID" value="AAC23225"/>
    <property type="gene ID" value="HI_1571"/>
</dbReference>
<dbReference type="KEGG" id="hin:HI_1571"/>
<dbReference type="PATRIC" id="fig|71421.8.peg.1641"/>
<dbReference type="eggNOG" id="COG4383">
    <property type="taxonomic scope" value="Bacteria"/>
</dbReference>
<dbReference type="HOGENOM" id="CLU_2710660_0_0_6"/>
<dbReference type="OrthoDB" id="9797300at2"/>
<dbReference type="BioCyc" id="HINF71421:G1GJ1-1587-MONOMER"/>
<dbReference type="Proteomes" id="UP000000579">
    <property type="component" value="Chromosome"/>
</dbReference>
<dbReference type="InterPro" id="IPR009279">
    <property type="entry name" value="Portal_Mu"/>
</dbReference>
<dbReference type="Pfam" id="PF06074">
    <property type="entry name" value="Portal_Mu"/>
    <property type="match status" value="1"/>
</dbReference>
<reference key="1">
    <citation type="journal article" date="1995" name="Science">
        <title>Whole-genome random sequencing and assembly of Haemophilus influenzae Rd.</title>
        <authorList>
            <person name="Fleischmann R.D."/>
            <person name="Adams M.D."/>
            <person name="White O."/>
            <person name="Clayton R.A."/>
            <person name="Kirkness E.F."/>
            <person name="Kerlavage A.R."/>
            <person name="Bult C.J."/>
            <person name="Tomb J.-F."/>
            <person name="Dougherty B.A."/>
            <person name="Merrick J.M."/>
            <person name="McKenney K."/>
            <person name="Sutton G.G."/>
            <person name="FitzHugh W."/>
            <person name="Fields C.A."/>
            <person name="Gocayne J.D."/>
            <person name="Scott J.D."/>
            <person name="Shirley R."/>
            <person name="Liu L.-I."/>
            <person name="Glodek A."/>
            <person name="Kelley J.M."/>
            <person name="Weidman J.F."/>
            <person name="Phillips C.A."/>
            <person name="Spriggs T."/>
            <person name="Hedblom E."/>
            <person name="Cotton M.D."/>
            <person name="Utterback T.R."/>
            <person name="Hanna M.C."/>
            <person name="Nguyen D.T."/>
            <person name="Saudek D.M."/>
            <person name="Brandon R.C."/>
            <person name="Fine L.D."/>
            <person name="Fritchman J.L."/>
            <person name="Fuhrmann J.L."/>
            <person name="Geoghagen N.S.M."/>
            <person name="Gnehm C.L."/>
            <person name="McDonald L.A."/>
            <person name="Small K.V."/>
            <person name="Fraser C.M."/>
            <person name="Smith H.O."/>
            <person name="Venter J.C."/>
        </authorList>
    </citation>
    <scope>NUCLEOTIDE SEQUENCE [LARGE SCALE GENOMIC DNA]</scope>
    <source>
        <strain>ATCC 51907 / DSM 11121 / KW20 / Rd</strain>
    </source>
</reference>
<reference key="2">
    <citation type="submission" date="1998-05" db="EMBL/GenBank/DDBJ databases">
        <authorList>
            <person name="White O."/>
            <person name="Clayton R.A."/>
            <person name="Kerlavage A.R."/>
            <person name="Fleischmann R.D."/>
            <person name="Peterson J."/>
            <person name="Hickey E."/>
            <person name="Dodson R."/>
            <person name="Gwinn M."/>
        </authorList>
    </citation>
    <scope>SEQUENCE REVISION</scope>
</reference>
<feature type="chain" id="PRO_0000078091" description="Uncharacterized protein HI_1571">
    <location>
        <begin position="1"/>
        <end position="79"/>
    </location>
</feature>
<name>Y1571_HAEIN</name>
<gene>
    <name type="ordered locus">HI_1571</name>
</gene>
<protein>
    <recommendedName>
        <fullName>Uncharacterized protein HI_1571</fullName>
    </recommendedName>
</protein>
<sequence>MSLRHLAQIITQQIILPYLQINVDPNIAPHRIPYFEFDTKEYEDLSVFADAIPKLTGIGVQISESWVWDKLGIPEPQEG</sequence>
<proteinExistence type="predicted"/>
<accession>P44260</accession>
<keyword id="KW-1185">Reference proteome</keyword>